<accession>Q74FG3</accession>
<reference key="1">
    <citation type="journal article" date="2003" name="Science">
        <title>Genome of Geobacter sulfurreducens: metal reduction in subsurface environments.</title>
        <authorList>
            <person name="Methe B.A."/>
            <person name="Nelson K.E."/>
            <person name="Eisen J.A."/>
            <person name="Paulsen I.T."/>
            <person name="Nelson W.C."/>
            <person name="Heidelberg J.F."/>
            <person name="Wu D."/>
            <person name="Wu M."/>
            <person name="Ward N.L."/>
            <person name="Beanan M.J."/>
            <person name="Dodson R.J."/>
            <person name="Madupu R."/>
            <person name="Brinkac L.M."/>
            <person name="Daugherty S.C."/>
            <person name="DeBoy R.T."/>
            <person name="Durkin A.S."/>
            <person name="Gwinn M.L."/>
            <person name="Kolonay J.F."/>
            <person name="Sullivan S.A."/>
            <person name="Haft D.H."/>
            <person name="Selengut J."/>
            <person name="Davidsen T.M."/>
            <person name="Zafar N."/>
            <person name="White O."/>
            <person name="Tran B."/>
            <person name="Romero C."/>
            <person name="Forberger H.A."/>
            <person name="Weidman J.F."/>
            <person name="Khouri H.M."/>
            <person name="Feldblyum T.V."/>
            <person name="Utterback T.R."/>
            <person name="Van Aken S.E."/>
            <person name="Lovley D.R."/>
            <person name="Fraser C.M."/>
        </authorList>
    </citation>
    <scope>NUCLEOTIDE SEQUENCE [LARGE SCALE GENOMIC DNA]</scope>
    <source>
        <strain>ATCC 51573 / DSM 12127 / PCA</strain>
    </source>
</reference>
<sequence>MKFDILTLFPAMFDGPLTESIIRRAVERGFVDISLHNIRDYATDRHRVVDDAPYGGGDGMVMKVEPLAACIEAVKAERPAARVILTTPRGRRFDHDAARELAGYEELIIVCGRYEGIDERVRDLFVDDEFSIGDFVLTGGELAAMVMIDAVIRFIPGVLGSPGSAEYDSFADGLLEYPQYTRPVEFRGVQVPGVLLSGNHAEISRWRRQKALELTRRVRPDLLHKAELSSSDRDCLAMLEREGEP</sequence>
<proteinExistence type="inferred from homology"/>
<dbReference type="EC" id="2.1.1.228" evidence="1"/>
<dbReference type="EMBL" id="AE017180">
    <property type="protein sequence ID" value="AAR33976.1"/>
    <property type="molecule type" value="Genomic_DNA"/>
</dbReference>
<dbReference type="RefSeq" id="NP_951703.1">
    <property type="nucleotide sequence ID" value="NC_002939.5"/>
</dbReference>
<dbReference type="RefSeq" id="WP_010941307.1">
    <property type="nucleotide sequence ID" value="NC_002939.5"/>
</dbReference>
<dbReference type="SMR" id="Q74FG3"/>
<dbReference type="FunCoup" id="Q74FG3">
    <property type="interactions" value="532"/>
</dbReference>
<dbReference type="STRING" id="243231.GSU0646"/>
<dbReference type="EnsemblBacteria" id="AAR33976">
    <property type="protein sequence ID" value="AAR33976"/>
    <property type="gene ID" value="GSU0646"/>
</dbReference>
<dbReference type="KEGG" id="gsu:GSU0646"/>
<dbReference type="PATRIC" id="fig|243231.5.peg.642"/>
<dbReference type="eggNOG" id="COG0336">
    <property type="taxonomic scope" value="Bacteria"/>
</dbReference>
<dbReference type="HOGENOM" id="CLU_047363_0_1_7"/>
<dbReference type="InParanoid" id="Q74FG3"/>
<dbReference type="OrthoDB" id="9807416at2"/>
<dbReference type="Proteomes" id="UP000000577">
    <property type="component" value="Chromosome"/>
</dbReference>
<dbReference type="GO" id="GO:0005829">
    <property type="term" value="C:cytosol"/>
    <property type="evidence" value="ECO:0000318"/>
    <property type="project" value="GO_Central"/>
</dbReference>
<dbReference type="GO" id="GO:0052906">
    <property type="term" value="F:tRNA (guanine(37)-N1)-methyltransferase activity"/>
    <property type="evidence" value="ECO:0000318"/>
    <property type="project" value="GO_Central"/>
</dbReference>
<dbReference type="GO" id="GO:0002939">
    <property type="term" value="P:tRNA N1-guanine methylation"/>
    <property type="evidence" value="ECO:0000318"/>
    <property type="project" value="GO_Central"/>
</dbReference>
<dbReference type="CDD" id="cd18080">
    <property type="entry name" value="TrmD-like"/>
    <property type="match status" value="1"/>
</dbReference>
<dbReference type="FunFam" id="1.10.1270.20:FF:000001">
    <property type="entry name" value="tRNA (guanine-N(1)-)-methyltransferase"/>
    <property type="match status" value="1"/>
</dbReference>
<dbReference type="FunFam" id="3.40.1280.10:FF:000001">
    <property type="entry name" value="tRNA (guanine-N(1)-)-methyltransferase"/>
    <property type="match status" value="1"/>
</dbReference>
<dbReference type="Gene3D" id="3.40.1280.10">
    <property type="match status" value="1"/>
</dbReference>
<dbReference type="Gene3D" id="1.10.1270.20">
    <property type="entry name" value="tRNA(m1g37)methyltransferase, domain 2"/>
    <property type="match status" value="1"/>
</dbReference>
<dbReference type="HAMAP" id="MF_00605">
    <property type="entry name" value="TrmD"/>
    <property type="match status" value="1"/>
</dbReference>
<dbReference type="InterPro" id="IPR029028">
    <property type="entry name" value="Alpha/beta_knot_MTases"/>
</dbReference>
<dbReference type="InterPro" id="IPR023148">
    <property type="entry name" value="tRNA_m1G_MeTrfase_C_sf"/>
</dbReference>
<dbReference type="InterPro" id="IPR002649">
    <property type="entry name" value="tRNA_m1G_MeTrfase_TrmD"/>
</dbReference>
<dbReference type="InterPro" id="IPR029026">
    <property type="entry name" value="tRNA_m1G_MTases_N"/>
</dbReference>
<dbReference type="InterPro" id="IPR016009">
    <property type="entry name" value="tRNA_MeTrfase_TRMD/TRM10"/>
</dbReference>
<dbReference type="NCBIfam" id="NF000648">
    <property type="entry name" value="PRK00026.1"/>
    <property type="match status" value="1"/>
</dbReference>
<dbReference type="NCBIfam" id="TIGR00088">
    <property type="entry name" value="trmD"/>
    <property type="match status" value="1"/>
</dbReference>
<dbReference type="PANTHER" id="PTHR46417">
    <property type="entry name" value="TRNA (GUANINE-N(1)-)-METHYLTRANSFERASE"/>
    <property type="match status" value="1"/>
</dbReference>
<dbReference type="PANTHER" id="PTHR46417:SF1">
    <property type="entry name" value="TRNA (GUANINE-N(1)-)-METHYLTRANSFERASE"/>
    <property type="match status" value="1"/>
</dbReference>
<dbReference type="Pfam" id="PF01746">
    <property type="entry name" value="tRNA_m1G_MT"/>
    <property type="match status" value="1"/>
</dbReference>
<dbReference type="PIRSF" id="PIRSF000386">
    <property type="entry name" value="tRNA_mtase"/>
    <property type="match status" value="1"/>
</dbReference>
<dbReference type="SUPFAM" id="SSF75217">
    <property type="entry name" value="alpha/beta knot"/>
    <property type="match status" value="1"/>
</dbReference>
<name>TRMD_GEOSL</name>
<feature type="chain" id="PRO_0000060381" description="tRNA (guanine-N(1)-)-methyltransferase">
    <location>
        <begin position="1"/>
        <end position="245"/>
    </location>
</feature>
<feature type="binding site" evidence="1">
    <location>
        <position position="112"/>
    </location>
    <ligand>
        <name>S-adenosyl-L-methionine</name>
        <dbReference type="ChEBI" id="CHEBI:59789"/>
    </ligand>
</feature>
<feature type="binding site" evidence="1">
    <location>
        <begin position="132"/>
        <end position="137"/>
    </location>
    <ligand>
        <name>S-adenosyl-L-methionine</name>
        <dbReference type="ChEBI" id="CHEBI:59789"/>
    </ligand>
</feature>
<evidence type="ECO:0000255" key="1">
    <source>
        <dbReference type="HAMAP-Rule" id="MF_00605"/>
    </source>
</evidence>
<organism>
    <name type="scientific">Geobacter sulfurreducens (strain ATCC 51573 / DSM 12127 / PCA)</name>
    <dbReference type="NCBI Taxonomy" id="243231"/>
    <lineage>
        <taxon>Bacteria</taxon>
        <taxon>Pseudomonadati</taxon>
        <taxon>Thermodesulfobacteriota</taxon>
        <taxon>Desulfuromonadia</taxon>
        <taxon>Geobacterales</taxon>
        <taxon>Geobacteraceae</taxon>
        <taxon>Geobacter</taxon>
    </lineage>
</organism>
<protein>
    <recommendedName>
        <fullName evidence="1">tRNA (guanine-N(1)-)-methyltransferase</fullName>
        <ecNumber evidence="1">2.1.1.228</ecNumber>
    </recommendedName>
    <alternativeName>
        <fullName evidence="1">M1G-methyltransferase</fullName>
    </alternativeName>
    <alternativeName>
        <fullName evidence="1">tRNA [GM37] methyltransferase</fullName>
    </alternativeName>
</protein>
<keyword id="KW-0963">Cytoplasm</keyword>
<keyword id="KW-0489">Methyltransferase</keyword>
<keyword id="KW-1185">Reference proteome</keyword>
<keyword id="KW-0949">S-adenosyl-L-methionine</keyword>
<keyword id="KW-0808">Transferase</keyword>
<keyword id="KW-0819">tRNA processing</keyword>
<gene>
    <name evidence="1" type="primary">trmD</name>
    <name type="ordered locus">GSU0646</name>
</gene>
<comment type="function">
    <text evidence="1">Specifically methylates guanosine-37 in various tRNAs.</text>
</comment>
<comment type="catalytic activity">
    <reaction evidence="1">
        <text>guanosine(37) in tRNA + S-adenosyl-L-methionine = N(1)-methylguanosine(37) in tRNA + S-adenosyl-L-homocysteine + H(+)</text>
        <dbReference type="Rhea" id="RHEA:36899"/>
        <dbReference type="Rhea" id="RHEA-COMP:10145"/>
        <dbReference type="Rhea" id="RHEA-COMP:10147"/>
        <dbReference type="ChEBI" id="CHEBI:15378"/>
        <dbReference type="ChEBI" id="CHEBI:57856"/>
        <dbReference type="ChEBI" id="CHEBI:59789"/>
        <dbReference type="ChEBI" id="CHEBI:73542"/>
        <dbReference type="ChEBI" id="CHEBI:74269"/>
        <dbReference type="EC" id="2.1.1.228"/>
    </reaction>
</comment>
<comment type="subunit">
    <text evidence="1">Homodimer.</text>
</comment>
<comment type="subcellular location">
    <subcellularLocation>
        <location evidence="1">Cytoplasm</location>
    </subcellularLocation>
</comment>
<comment type="similarity">
    <text evidence="1">Belongs to the RNA methyltransferase TrmD family.</text>
</comment>